<proteinExistence type="inferred from homology"/>
<comment type="catalytic activity">
    <reaction>
        <text>L-histidine = trans-urocanate + NH4(+)</text>
        <dbReference type="Rhea" id="RHEA:21232"/>
        <dbReference type="ChEBI" id="CHEBI:17771"/>
        <dbReference type="ChEBI" id="CHEBI:28938"/>
        <dbReference type="ChEBI" id="CHEBI:57595"/>
        <dbReference type="EC" id="4.3.1.3"/>
    </reaction>
</comment>
<comment type="pathway">
    <text>Amino-acid degradation; L-histidine degradation into L-glutamate; N-formimidoyl-L-glutamate from L-histidine: step 1/3.</text>
</comment>
<comment type="subcellular location">
    <subcellularLocation>
        <location evidence="2">Cytoplasm</location>
    </subcellularLocation>
</comment>
<comment type="PTM">
    <text evidence="1">Contains an active site 4-methylidene-imidazol-5-one (MIO), which is formed autocatalytically by cyclization and dehydration of residues Ala-Ser-Gly.</text>
</comment>
<comment type="similarity">
    <text evidence="2">Belongs to the PAL/histidase family.</text>
</comment>
<comment type="sequence caution" evidence="2">
    <conflict type="erroneous initiation">
        <sequence resource="EMBL-CDS" id="CAD16353"/>
    </conflict>
</comment>
<accession>Q8XW29</accession>
<dbReference type="EC" id="4.3.1.3"/>
<dbReference type="EMBL" id="AL646052">
    <property type="protein sequence ID" value="CAD16353.1"/>
    <property type="status" value="ALT_INIT"/>
    <property type="molecule type" value="Genomic_DNA"/>
</dbReference>
<dbReference type="RefSeq" id="WP_011002556.1">
    <property type="nucleotide sequence ID" value="NC_003295.1"/>
</dbReference>
<dbReference type="SMR" id="Q8XW29"/>
<dbReference type="STRING" id="267608.RSc2646"/>
<dbReference type="EnsemblBacteria" id="CAD16353">
    <property type="protein sequence ID" value="CAD16353"/>
    <property type="gene ID" value="RSc2646"/>
</dbReference>
<dbReference type="KEGG" id="rso:RSc2646"/>
<dbReference type="PATRIC" id="fig|267608.8.peg.2687"/>
<dbReference type="eggNOG" id="COG2986">
    <property type="taxonomic scope" value="Bacteria"/>
</dbReference>
<dbReference type="HOGENOM" id="CLU_014801_4_0_4"/>
<dbReference type="UniPathway" id="UPA00379">
    <property type="reaction ID" value="UER00549"/>
</dbReference>
<dbReference type="Proteomes" id="UP000001436">
    <property type="component" value="Chromosome"/>
</dbReference>
<dbReference type="GO" id="GO:0005737">
    <property type="term" value="C:cytoplasm"/>
    <property type="evidence" value="ECO:0007669"/>
    <property type="project" value="UniProtKB-SubCell"/>
</dbReference>
<dbReference type="GO" id="GO:0004397">
    <property type="term" value="F:histidine ammonia-lyase activity"/>
    <property type="evidence" value="ECO:0007669"/>
    <property type="project" value="UniProtKB-UniRule"/>
</dbReference>
<dbReference type="GO" id="GO:0019556">
    <property type="term" value="P:L-histidine catabolic process to glutamate and formamide"/>
    <property type="evidence" value="ECO:0007669"/>
    <property type="project" value="UniProtKB-UniPathway"/>
</dbReference>
<dbReference type="GO" id="GO:0019557">
    <property type="term" value="P:L-histidine catabolic process to glutamate and formate"/>
    <property type="evidence" value="ECO:0007669"/>
    <property type="project" value="UniProtKB-UniPathway"/>
</dbReference>
<dbReference type="CDD" id="cd00332">
    <property type="entry name" value="PAL-HAL"/>
    <property type="match status" value="1"/>
</dbReference>
<dbReference type="FunFam" id="1.10.275.10:FF:000005">
    <property type="entry name" value="Histidine ammonia-lyase"/>
    <property type="match status" value="1"/>
</dbReference>
<dbReference type="FunFam" id="1.20.200.10:FF:000003">
    <property type="entry name" value="Histidine ammonia-lyase"/>
    <property type="match status" value="1"/>
</dbReference>
<dbReference type="Gene3D" id="1.20.200.10">
    <property type="entry name" value="Fumarase/aspartase (Central domain)"/>
    <property type="match status" value="1"/>
</dbReference>
<dbReference type="Gene3D" id="1.10.275.10">
    <property type="entry name" value="Fumarase/aspartase (N-terminal domain)"/>
    <property type="match status" value="1"/>
</dbReference>
<dbReference type="HAMAP" id="MF_00229">
    <property type="entry name" value="His_ammonia_lyase"/>
    <property type="match status" value="1"/>
</dbReference>
<dbReference type="InterPro" id="IPR001106">
    <property type="entry name" value="Aromatic_Lyase"/>
</dbReference>
<dbReference type="InterPro" id="IPR024083">
    <property type="entry name" value="Fumarase/histidase_N"/>
</dbReference>
<dbReference type="InterPro" id="IPR005921">
    <property type="entry name" value="HutH"/>
</dbReference>
<dbReference type="InterPro" id="IPR008948">
    <property type="entry name" value="L-Aspartase-like"/>
</dbReference>
<dbReference type="InterPro" id="IPR022313">
    <property type="entry name" value="Phe/His_NH3-lyase_AS"/>
</dbReference>
<dbReference type="NCBIfam" id="TIGR01225">
    <property type="entry name" value="hutH"/>
    <property type="match status" value="1"/>
</dbReference>
<dbReference type="NCBIfam" id="NF006871">
    <property type="entry name" value="PRK09367.1"/>
    <property type="match status" value="1"/>
</dbReference>
<dbReference type="PANTHER" id="PTHR10362">
    <property type="entry name" value="HISTIDINE AMMONIA-LYASE"/>
    <property type="match status" value="1"/>
</dbReference>
<dbReference type="Pfam" id="PF00221">
    <property type="entry name" value="Lyase_aromatic"/>
    <property type="match status" value="1"/>
</dbReference>
<dbReference type="SUPFAM" id="SSF48557">
    <property type="entry name" value="L-aspartase-like"/>
    <property type="match status" value="1"/>
</dbReference>
<dbReference type="PROSITE" id="PS00488">
    <property type="entry name" value="PAL_HISTIDASE"/>
    <property type="match status" value="1"/>
</dbReference>
<keyword id="KW-0963">Cytoplasm</keyword>
<keyword id="KW-0369">Histidine metabolism</keyword>
<keyword id="KW-0456">Lyase</keyword>
<keyword id="KW-1185">Reference proteome</keyword>
<protein>
    <recommendedName>
        <fullName>Histidine ammonia-lyase</fullName>
        <shortName>Histidase</shortName>
        <ecNumber>4.3.1.3</ecNumber>
    </recommendedName>
</protein>
<organism>
    <name type="scientific">Ralstonia nicotianae (strain ATCC BAA-1114 / GMI1000)</name>
    <name type="common">Ralstonia solanacearum</name>
    <dbReference type="NCBI Taxonomy" id="267608"/>
    <lineage>
        <taxon>Bacteria</taxon>
        <taxon>Pseudomonadati</taxon>
        <taxon>Pseudomonadota</taxon>
        <taxon>Betaproteobacteria</taxon>
        <taxon>Burkholderiales</taxon>
        <taxon>Burkholderiaceae</taxon>
        <taxon>Ralstonia</taxon>
        <taxon>Ralstonia solanacearum species complex</taxon>
    </lineage>
</organism>
<feature type="chain" id="PRO_0000161020" description="Histidine ammonia-lyase">
    <location>
        <begin position="1"/>
        <end position="515"/>
    </location>
</feature>
<feature type="modified residue" description="2,3-didehydroalanine (Ser)" evidence="1">
    <location>
        <position position="147"/>
    </location>
</feature>
<feature type="cross-link" description="5-imidazolinone (Ala-Gly)" evidence="1">
    <location>
        <begin position="146"/>
        <end position="148"/>
    </location>
</feature>
<name>HUTH_RALN1</name>
<evidence type="ECO:0000250" key="1"/>
<evidence type="ECO:0000305" key="2"/>
<reference key="1">
    <citation type="journal article" date="2002" name="Nature">
        <title>Genome sequence of the plant pathogen Ralstonia solanacearum.</title>
        <authorList>
            <person name="Salanoubat M."/>
            <person name="Genin S."/>
            <person name="Artiguenave F."/>
            <person name="Gouzy J."/>
            <person name="Mangenot S."/>
            <person name="Arlat M."/>
            <person name="Billault A."/>
            <person name="Brottier P."/>
            <person name="Camus J.-C."/>
            <person name="Cattolico L."/>
            <person name="Chandler M."/>
            <person name="Choisne N."/>
            <person name="Claudel-Renard C."/>
            <person name="Cunnac S."/>
            <person name="Demange N."/>
            <person name="Gaspin C."/>
            <person name="Lavie M."/>
            <person name="Moisan A."/>
            <person name="Robert C."/>
            <person name="Saurin W."/>
            <person name="Schiex T."/>
            <person name="Siguier P."/>
            <person name="Thebault P."/>
            <person name="Whalen M."/>
            <person name="Wincker P."/>
            <person name="Levy M."/>
            <person name="Weissenbach J."/>
            <person name="Boucher C.A."/>
        </authorList>
    </citation>
    <scope>NUCLEOTIDE SEQUENCE [LARGE SCALE GENOMIC DNA]</scope>
    <source>
        <strain>ATCC BAA-1114 / GMI1000</strain>
    </source>
</reference>
<sequence length="515" mass="53246">MTTPSILTLHPGEMTFADLRRVWLAPTPVTLSGDCAAAIEASAATVQAIVARGEPAYGINTGFGKLARTQIATHELEHLQRNLILSHAVGTGQDLDDNVARLVLLMKAASLARGYSGVRRVVIDTLLAMLNAGIVPCIPSKGSVGASGDLAPLAHMTLAMLGEGDARVNGVRKPAREALAAAGIAPIALAAKEGLALINGTQVSTALALNGLFLAERLLQAATVAGALSVDAAKGSDAPFDPRVHTVRGQAGQIATAAVYRGLLAGSAIRRSHLVGDTRVQDPYSLRCQPQVMGACLDLIRQAGATLLTEANAVTDNPLVYADAGEVISGGNFHAEPVAFAADMLALAIAEIGALSERRIALLIDSTLSGLPPFLVEQPGLNSGFMIAHVTAAALASENKSLAHPASVDSLPTSANQEDHVSMATFAGRRLAEMAGNTATIVGIEALAAAQGIDFHRPLATSDALARAHTCIRSRVAYYGEDRLFAPDIEAARRLVLDGDLGDSCRAHLADLALA</sequence>
<gene>
    <name type="primary">hutH</name>
    <name type="ordered locus">RSc2646</name>
    <name type="ORF">RS04570</name>
</gene>